<reference key="1">
    <citation type="journal article" date="2000" name="J. Cell Sci.">
        <title>The SHR3 homologue from S. pombe demonstrates a conserved function of ER packaging chaperones.</title>
        <authorList>
            <person name="Martinez P."/>
            <person name="Ljungdahl P.O."/>
        </authorList>
    </citation>
    <scope>NUCLEOTIDE SEQUENCE [GENOMIC DNA]</scope>
    <scope>SUBCELLULAR LOCATION</scope>
    <source>
        <strain>972 / ATCC 24843</strain>
    </source>
</reference>
<reference key="2">
    <citation type="journal article" date="2002" name="Nature">
        <title>The genome sequence of Schizosaccharomyces pombe.</title>
        <authorList>
            <person name="Wood V."/>
            <person name="Gwilliam R."/>
            <person name="Rajandream M.A."/>
            <person name="Lyne M.H."/>
            <person name="Lyne R."/>
            <person name="Stewart A."/>
            <person name="Sgouros J.G."/>
            <person name="Peat N."/>
            <person name="Hayles J."/>
            <person name="Baker S.G."/>
            <person name="Basham D."/>
            <person name="Bowman S."/>
            <person name="Brooks K."/>
            <person name="Brown D."/>
            <person name="Brown S."/>
            <person name="Chillingworth T."/>
            <person name="Churcher C.M."/>
            <person name="Collins M."/>
            <person name="Connor R."/>
            <person name="Cronin A."/>
            <person name="Davis P."/>
            <person name="Feltwell T."/>
            <person name="Fraser A."/>
            <person name="Gentles S."/>
            <person name="Goble A."/>
            <person name="Hamlin N."/>
            <person name="Harris D.E."/>
            <person name="Hidalgo J."/>
            <person name="Hodgson G."/>
            <person name="Holroyd S."/>
            <person name="Hornsby T."/>
            <person name="Howarth S."/>
            <person name="Huckle E.J."/>
            <person name="Hunt S."/>
            <person name="Jagels K."/>
            <person name="James K.D."/>
            <person name="Jones L."/>
            <person name="Jones M."/>
            <person name="Leather S."/>
            <person name="McDonald S."/>
            <person name="McLean J."/>
            <person name="Mooney P."/>
            <person name="Moule S."/>
            <person name="Mungall K.L."/>
            <person name="Murphy L.D."/>
            <person name="Niblett D."/>
            <person name="Odell C."/>
            <person name="Oliver K."/>
            <person name="O'Neil S."/>
            <person name="Pearson D."/>
            <person name="Quail M.A."/>
            <person name="Rabbinowitsch E."/>
            <person name="Rutherford K.M."/>
            <person name="Rutter S."/>
            <person name="Saunders D."/>
            <person name="Seeger K."/>
            <person name="Sharp S."/>
            <person name="Skelton J."/>
            <person name="Simmonds M.N."/>
            <person name="Squares R."/>
            <person name="Squares S."/>
            <person name="Stevens K."/>
            <person name="Taylor K."/>
            <person name="Taylor R.G."/>
            <person name="Tivey A."/>
            <person name="Walsh S.V."/>
            <person name="Warren T."/>
            <person name="Whitehead S."/>
            <person name="Woodward J.R."/>
            <person name="Volckaert G."/>
            <person name="Aert R."/>
            <person name="Robben J."/>
            <person name="Grymonprez B."/>
            <person name="Weltjens I."/>
            <person name="Vanstreels E."/>
            <person name="Rieger M."/>
            <person name="Schaefer M."/>
            <person name="Mueller-Auer S."/>
            <person name="Gabel C."/>
            <person name="Fuchs M."/>
            <person name="Duesterhoeft A."/>
            <person name="Fritzc C."/>
            <person name="Holzer E."/>
            <person name="Moestl D."/>
            <person name="Hilbert H."/>
            <person name="Borzym K."/>
            <person name="Langer I."/>
            <person name="Beck A."/>
            <person name="Lehrach H."/>
            <person name="Reinhardt R."/>
            <person name="Pohl T.M."/>
            <person name="Eger P."/>
            <person name="Zimmermann W."/>
            <person name="Wedler H."/>
            <person name="Wambutt R."/>
            <person name="Purnelle B."/>
            <person name="Goffeau A."/>
            <person name="Cadieu E."/>
            <person name="Dreano S."/>
            <person name="Gloux S."/>
            <person name="Lelaure V."/>
            <person name="Mottier S."/>
            <person name="Galibert F."/>
            <person name="Aves S.J."/>
            <person name="Xiang Z."/>
            <person name="Hunt C."/>
            <person name="Moore K."/>
            <person name="Hurst S.M."/>
            <person name="Lucas M."/>
            <person name="Rochet M."/>
            <person name="Gaillardin C."/>
            <person name="Tallada V.A."/>
            <person name="Garzon A."/>
            <person name="Thode G."/>
            <person name="Daga R.R."/>
            <person name="Cruzado L."/>
            <person name="Jimenez J."/>
            <person name="Sanchez M."/>
            <person name="del Rey F."/>
            <person name="Benito J."/>
            <person name="Dominguez A."/>
            <person name="Revuelta J.L."/>
            <person name="Moreno S."/>
            <person name="Armstrong J."/>
            <person name="Forsburg S.L."/>
            <person name="Cerutti L."/>
            <person name="Lowe T."/>
            <person name="McCombie W.R."/>
            <person name="Paulsen I."/>
            <person name="Potashkin J."/>
            <person name="Shpakovski G.V."/>
            <person name="Ussery D."/>
            <person name="Barrell B.G."/>
            <person name="Nurse P."/>
        </authorList>
    </citation>
    <scope>NUCLEOTIDE SEQUENCE [LARGE SCALE GENOMIC DNA]</scope>
    <source>
        <strain>972 / ATCC 24843</strain>
    </source>
</reference>
<evidence type="ECO:0000250" key="1"/>
<evidence type="ECO:0000255" key="2"/>
<evidence type="ECO:0000256" key="3">
    <source>
        <dbReference type="SAM" id="MobiDB-lite"/>
    </source>
</evidence>
<evidence type="ECO:0000269" key="4">
    <source>
    </source>
</evidence>
<evidence type="ECO:0000305" key="5"/>
<keyword id="KW-0256">Endoplasmic reticulum</keyword>
<keyword id="KW-0472">Membrane</keyword>
<keyword id="KW-0653">Protein transport</keyword>
<keyword id="KW-1185">Reference proteome</keyword>
<keyword id="KW-0811">Translocation</keyword>
<keyword id="KW-0812">Transmembrane</keyword>
<keyword id="KW-1133">Transmembrane helix</keyword>
<keyword id="KW-0813">Transport</keyword>
<protein>
    <recommendedName>
        <fullName>Secretory component protein psh3</fullName>
    </recommendedName>
</protein>
<gene>
    <name type="primary">psh3</name>
    <name type="ORF">SPBC409.20c</name>
</gene>
<feature type="chain" id="PRO_0000097739" description="Secretory component protein psh3">
    <location>
        <begin position="1"/>
        <end position="215"/>
    </location>
</feature>
<feature type="topological domain" description="Cytoplasmic" evidence="2">
    <location>
        <begin position="1"/>
        <end position="21"/>
    </location>
</feature>
<feature type="transmembrane region" description="Helical" evidence="2">
    <location>
        <begin position="22"/>
        <end position="42"/>
    </location>
</feature>
<feature type="topological domain" description="Extracellular" evidence="2">
    <location>
        <begin position="43"/>
        <end position="67"/>
    </location>
</feature>
<feature type="transmembrane region" description="Helical" evidence="2">
    <location>
        <begin position="68"/>
        <end position="88"/>
    </location>
</feature>
<feature type="topological domain" description="Cytoplasmic" evidence="2">
    <location>
        <begin position="89"/>
        <end position="105"/>
    </location>
</feature>
<feature type="transmembrane region" description="Helical" evidence="2">
    <location>
        <begin position="106"/>
        <end position="126"/>
    </location>
</feature>
<feature type="topological domain" description="Extracellular" evidence="2">
    <location>
        <begin position="127"/>
        <end position="147"/>
    </location>
</feature>
<feature type="transmembrane region" description="Helical" evidence="2">
    <location>
        <begin position="148"/>
        <end position="168"/>
    </location>
</feature>
<feature type="topological domain" description="Cytoplasmic" evidence="2">
    <location>
        <begin position="169"/>
        <end position="215"/>
    </location>
</feature>
<feature type="region of interest" description="Disordered" evidence="3">
    <location>
        <begin position="190"/>
        <end position="215"/>
    </location>
</feature>
<feature type="compositionally biased region" description="Low complexity" evidence="3">
    <location>
        <begin position="196"/>
        <end position="215"/>
    </location>
</feature>
<comment type="function">
    <text evidence="1">Involved in amino acid permease processing and required for the efficient translocation of structurally related amino acid permeases from the endoplasmic reticulum to the plasma membrane.</text>
</comment>
<comment type="subunit">
    <text evidence="1">Monomer.</text>
</comment>
<comment type="subcellular location">
    <subcellularLocation>
        <location evidence="4">Endoplasmic reticulum membrane</location>
        <topology evidence="4">Multi-pass membrane protein</topology>
    </subcellularLocation>
</comment>
<comment type="similarity">
    <text evidence="5">To yeast SHR3.</text>
</comment>
<name>SHR3_SCHPO</name>
<accession>Q9Y876</accession>
<dbReference type="EMBL" id="AF160498">
    <property type="protein sequence ID" value="AAD44978.1"/>
    <property type="molecule type" value="Genomic_DNA"/>
</dbReference>
<dbReference type="EMBL" id="CU329671">
    <property type="protein sequence ID" value="CAB52622.1"/>
    <property type="molecule type" value="Genomic_DNA"/>
</dbReference>
<dbReference type="PIR" id="T40447">
    <property type="entry name" value="T40447"/>
</dbReference>
<dbReference type="RefSeq" id="NP_595470.1">
    <property type="nucleotide sequence ID" value="NM_001021380.2"/>
</dbReference>
<dbReference type="BioGRID" id="277319">
    <property type="interactions" value="102"/>
</dbReference>
<dbReference type="FunCoup" id="Q9Y876">
    <property type="interactions" value="95"/>
</dbReference>
<dbReference type="STRING" id="284812.Q9Y876"/>
<dbReference type="iPTMnet" id="Q9Y876"/>
<dbReference type="PaxDb" id="4896-SPBC409.20c.1"/>
<dbReference type="EnsemblFungi" id="SPBC409.20c.1">
    <property type="protein sequence ID" value="SPBC409.20c.1:pep"/>
    <property type="gene ID" value="SPBC409.20c"/>
</dbReference>
<dbReference type="GeneID" id="2540800"/>
<dbReference type="KEGG" id="spo:2540800"/>
<dbReference type="PomBase" id="SPBC409.20c">
    <property type="gene designation" value="psh3"/>
</dbReference>
<dbReference type="VEuPathDB" id="FungiDB:SPBC409.20c"/>
<dbReference type="eggNOG" id="ENOG502T3NF">
    <property type="taxonomic scope" value="Eukaryota"/>
</dbReference>
<dbReference type="HOGENOM" id="CLU_1283927_0_0_1"/>
<dbReference type="InParanoid" id="Q9Y876"/>
<dbReference type="OMA" id="DAYYSFL"/>
<dbReference type="PhylomeDB" id="Q9Y876"/>
<dbReference type="PRO" id="PR:Q9Y876"/>
<dbReference type="Proteomes" id="UP000002485">
    <property type="component" value="Chromosome II"/>
</dbReference>
<dbReference type="GO" id="GO:0005783">
    <property type="term" value="C:endoplasmic reticulum"/>
    <property type="evidence" value="ECO:0000314"/>
    <property type="project" value="PomBase"/>
</dbReference>
<dbReference type="GO" id="GO:0005789">
    <property type="term" value="C:endoplasmic reticulum membrane"/>
    <property type="evidence" value="ECO:0000318"/>
    <property type="project" value="GO_Central"/>
</dbReference>
<dbReference type="GO" id="GO:0044183">
    <property type="term" value="F:protein folding chaperone"/>
    <property type="evidence" value="ECO:0000266"/>
    <property type="project" value="PomBase"/>
</dbReference>
<dbReference type="GO" id="GO:0051082">
    <property type="term" value="F:unfolded protein binding"/>
    <property type="evidence" value="ECO:0000318"/>
    <property type="project" value="GO_Central"/>
</dbReference>
<dbReference type="GO" id="GO:0006888">
    <property type="term" value="P:endoplasmic reticulum to Golgi vesicle-mediated transport"/>
    <property type="evidence" value="ECO:0000318"/>
    <property type="project" value="GO_Central"/>
</dbReference>
<dbReference type="GO" id="GO:0045048">
    <property type="term" value="P:protein insertion into ER membrane"/>
    <property type="evidence" value="ECO:0000266"/>
    <property type="project" value="PomBase"/>
</dbReference>
<dbReference type="GO" id="GO:0015031">
    <property type="term" value="P:protein transport"/>
    <property type="evidence" value="ECO:0007669"/>
    <property type="project" value="UniProtKB-KW"/>
</dbReference>
<dbReference type="InterPro" id="IPR013248">
    <property type="entry name" value="Psh3/Shr3"/>
</dbReference>
<dbReference type="PANTHER" id="PTHR28228">
    <property type="entry name" value="SECRETORY COMPONENT PROTEIN SHR3"/>
    <property type="match status" value="1"/>
</dbReference>
<dbReference type="PANTHER" id="PTHR28228:SF1">
    <property type="entry name" value="SECRETORY COMPONENT PROTEIN SHR3"/>
    <property type="match status" value="1"/>
</dbReference>
<dbReference type="Pfam" id="PF08229">
    <property type="entry name" value="SHR3_chaperone"/>
    <property type="match status" value="1"/>
</dbReference>
<dbReference type="PIRSF" id="PIRSF029187">
    <property type="entry name" value="Shr3_AAP_chap"/>
    <property type="match status" value="1"/>
</dbReference>
<dbReference type="SMART" id="SM00786">
    <property type="entry name" value="SHR3_chaperone"/>
    <property type="match status" value="1"/>
</dbReference>
<proteinExistence type="inferred from homology"/>
<organism>
    <name type="scientific">Schizosaccharomyces pombe (strain 972 / ATCC 24843)</name>
    <name type="common">Fission yeast</name>
    <dbReference type="NCBI Taxonomy" id="284812"/>
    <lineage>
        <taxon>Eukaryota</taxon>
        <taxon>Fungi</taxon>
        <taxon>Dikarya</taxon>
        <taxon>Ascomycota</taxon>
        <taxon>Taphrinomycotina</taxon>
        <taxon>Schizosaccharomycetes</taxon>
        <taxon>Schizosaccharomycetales</taxon>
        <taxon>Schizosaccharomycetaceae</taxon>
        <taxon>Schizosaccharomyces</taxon>
    </lineage>
</organism>
<sequence>MAKRSIFRFADEKGLKVAARYGVLMSTSFIFALLFHSSVADVNTLWSPGPESAFDAAETYYTLVAGSHFIVKYTVYTIMGLNMIFHLIQATGAKGDDKLFFYSSTLLYLTALILFIVNVAPSMLVVKLQNYVQFPRNMHLSVLAASHVLVEFLLAGVILIQLGYVFGYHVQSIQQREYAEDMREQELAEKAKLESESATTQSVETVSTESVSKRK</sequence>